<dbReference type="EMBL" id="CP000127">
    <property type="protein sequence ID" value="ABA59478.1"/>
    <property type="molecule type" value="Genomic_DNA"/>
</dbReference>
<dbReference type="RefSeq" id="WP_011331131.1">
    <property type="nucleotide sequence ID" value="NC_007484.1"/>
</dbReference>
<dbReference type="SMR" id="Q3J6R8"/>
<dbReference type="FunCoup" id="Q3J6R8">
    <property type="interactions" value="521"/>
</dbReference>
<dbReference type="STRING" id="323261.Noc_3037"/>
<dbReference type="KEGG" id="noc:Noc_3037"/>
<dbReference type="eggNOG" id="COG0268">
    <property type="taxonomic scope" value="Bacteria"/>
</dbReference>
<dbReference type="HOGENOM" id="CLU_160655_4_0_6"/>
<dbReference type="InParanoid" id="Q3J6R8"/>
<dbReference type="Proteomes" id="UP000006838">
    <property type="component" value="Chromosome"/>
</dbReference>
<dbReference type="GO" id="GO:0005829">
    <property type="term" value="C:cytosol"/>
    <property type="evidence" value="ECO:0007669"/>
    <property type="project" value="TreeGrafter"/>
</dbReference>
<dbReference type="GO" id="GO:0015935">
    <property type="term" value="C:small ribosomal subunit"/>
    <property type="evidence" value="ECO:0007669"/>
    <property type="project" value="TreeGrafter"/>
</dbReference>
<dbReference type="GO" id="GO:0070181">
    <property type="term" value="F:small ribosomal subunit rRNA binding"/>
    <property type="evidence" value="ECO:0007669"/>
    <property type="project" value="TreeGrafter"/>
</dbReference>
<dbReference type="GO" id="GO:0003735">
    <property type="term" value="F:structural constituent of ribosome"/>
    <property type="evidence" value="ECO:0007669"/>
    <property type="project" value="InterPro"/>
</dbReference>
<dbReference type="GO" id="GO:0006412">
    <property type="term" value="P:translation"/>
    <property type="evidence" value="ECO:0007669"/>
    <property type="project" value="UniProtKB-UniRule"/>
</dbReference>
<dbReference type="FunFam" id="1.20.58.110:FF:000001">
    <property type="entry name" value="30S ribosomal protein S20"/>
    <property type="match status" value="1"/>
</dbReference>
<dbReference type="Gene3D" id="1.20.58.110">
    <property type="entry name" value="Ribosomal protein S20"/>
    <property type="match status" value="1"/>
</dbReference>
<dbReference type="HAMAP" id="MF_00500">
    <property type="entry name" value="Ribosomal_bS20"/>
    <property type="match status" value="1"/>
</dbReference>
<dbReference type="InterPro" id="IPR002583">
    <property type="entry name" value="Ribosomal_bS20"/>
</dbReference>
<dbReference type="InterPro" id="IPR036510">
    <property type="entry name" value="Ribosomal_bS20_sf"/>
</dbReference>
<dbReference type="NCBIfam" id="TIGR00029">
    <property type="entry name" value="S20"/>
    <property type="match status" value="1"/>
</dbReference>
<dbReference type="PANTHER" id="PTHR33398">
    <property type="entry name" value="30S RIBOSOMAL PROTEIN S20"/>
    <property type="match status" value="1"/>
</dbReference>
<dbReference type="PANTHER" id="PTHR33398:SF1">
    <property type="entry name" value="SMALL RIBOSOMAL SUBUNIT PROTEIN BS20C"/>
    <property type="match status" value="1"/>
</dbReference>
<dbReference type="Pfam" id="PF01649">
    <property type="entry name" value="Ribosomal_S20p"/>
    <property type="match status" value="1"/>
</dbReference>
<dbReference type="SUPFAM" id="SSF46992">
    <property type="entry name" value="Ribosomal protein S20"/>
    <property type="match status" value="1"/>
</dbReference>
<name>RS20_NITOC</name>
<protein>
    <recommendedName>
        <fullName evidence="1">Small ribosomal subunit protein bS20</fullName>
    </recommendedName>
    <alternativeName>
        <fullName evidence="3">30S ribosomal protein S20</fullName>
    </alternativeName>
</protein>
<proteinExistence type="inferred from homology"/>
<gene>
    <name evidence="1" type="primary">rpsT</name>
    <name type="ordered locus">Noc_3037</name>
</gene>
<sequence length="87" mass="9667">MANTSQARKRARQAGVRRVRNAGQRSMMRTYVKKIVKAIVSGDKSQAAAAYKEAVPILDRLARKGLVHPNKAARHKSRLNAQIRAMS</sequence>
<accession>Q3J6R8</accession>
<organism>
    <name type="scientific">Nitrosococcus oceani (strain ATCC 19707 / BCRC 17464 / JCM 30415 / NCIMB 11848 / C-107)</name>
    <dbReference type="NCBI Taxonomy" id="323261"/>
    <lineage>
        <taxon>Bacteria</taxon>
        <taxon>Pseudomonadati</taxon>
        <taxon>Pseudomonadota</taxon>
        <taxon>Gammaproteobacteria</taxon>
        <taxon>Chromatiales</taxon>
        <taxon>Chromatiaceae</taxon>
        <taxon>Nitrosococcus</taxon>
    </lineage>
</organism>
<reference key="1">
    <citation type="journal article" date="2006" name="Appl. Environ. Microbiol.">
        <title>Complete genome sequence of the marine, chemolithoautotrophic, ammonia-oxidizing bacterium Nitrosococcus oceani ATCC 19707.</title>
        <authorList>
            <person name="Klotz M.G."/>
            <person name="Arp D.J."/>
            <person name="Chain P.S.G."/>
            <person name="El-Sheikh A.F."/>
            <person name="Hauser L.J."/>
            <person name="Hommes N.G."/>
            <person name="Larimer F.W."/>
            <person name="Malfatti S.A."/>
            <person name="Norton J.M."/>
            <person name="Poret-Peterson A.T."/>
            <person name="Vergez L.M."/>
            <person name="Ward B.B."/>
        </authorList>
    </citation>
    <scope>NUCLEOTIDE SEQUENCE [LARGE SCALE GENOMIC DNA]</scope>
    <source>
        <strain>ATCC 19707 / BCRC 17464 / JCM 30415 / NCIMB 11848 / C-107</strain>
    </source>
</reference>
<comment type="function">
    <text evidence="1">Binds directly to 16S ribosomal RNA.</text>
</comment>
<comment type="similarity">
    <text evidence="1">Belongs to the bacterial ribosomal protein bS20 family.</text>
</comment>
<feature type="chain" id="PRO_0000224975" description="Small ribosomal subunit protein bS20">
    <location>
        <begin position="1"/>
        <end position="87"/>
    </location>
</feature>
<feature type="region of interest" description="Disordered" evidence="2">
    <location>
        <begin position="1"/>
        <end position="22"/>
    </location>
</feature>
<feature type="compositionally biased region" description="Basic residues" evidence="2">
    <location>
        <begin position="7"/>
        <end position="20"/>
    </location>
</feature>
<evidence type="ECO:0000255" key="1">
    <source>
        <dbReference type="HAMAP-Rule" id="MF_00500"/>
    </source>
</evidence>
<evidence type="ECO:0000256" key="2">
    <source>
        <dbReference type="SAM" id="MobiDB-lite"/>
    </source>
</evidence>
<evidence type="ECO:0000305" key="3"/>
<keyword id="KW-1185">Reference proteome</keyword>
<keyword id="KW-0687">Ribonucleoprotein</keyword>
<keyword id="KW-0689">Ribosomal protein</keyword>
<keyword id="KW-0694">RNA-binding</keyword>
<keyword id="KW-0699">rRNA-binding</keyword>